<accession>A7ZQC5</accession>
<sequence length="876" mass="96004">MSKSTAEIRQAFLDFFHSKGHQVVASSSLVPHNDPTLLFTNAGMNQFKDVFLGLDKRNYSRATTSQRCVRAGGKHNDLENVGYTARHHTFFEMLGNFSFGDYFKHDAIQFAWELLTSEKWFALPKERLWVTVYESDDEAYEIWEKEVGIPRERIIRIGDNKGAPYASDNFWQMGDTGPCGPCTEIFYDHGDHIWGGPPGSPEEDGDRYIEIWNIVFMQFNRQADGTMEPLPKPSVDTGMGLERIAAVLQHVNSNYDIDLFRTLIQAVAKVTGATDLSNKSLRVIADHIRSCAFLIADGVMPSNENRGYVLRRIIRRAVRHGNMLGAKETFFYKLVGPLIDVMGSAGEDLKRQQAQVEQVLKTEEEQFARTLERGLALLDEELAKLSGDTLDGETAFRLYDTYGFPVDLTADVCRERNIKVDEAGFEAAMEEQRRRAREASGFGADYNAMIRVDSASEFKGYDHLELNGKVTALFVDGKAVDAINAGQEAVVVLDQTPFYAESGGQVGDKGELKGANFSFAVEDTQKYGQAIGHIGKLAAGSLKVGDAVQADVDEARRARIRLNHSATHLMHAALRQVLGTHVSQKGSLVNDKVLRFDFSHNEAMKPEEIRAVEDLVNAQIRRNLPIETNIMDLEAAKAKGAMALFGEKYDERVRVLSMGDFSTELCGGTHASRTGDIGLFRIISESGTAAGVRRIEAVTGEGAITTVHADSDRLSEVAHLLKGDSNNLADKVRSVLERTRQLEKELQQLKEQAAAQESANLSSKAIDVNGVKLLVSELSGVEPKMLRTMVDDLKNQLGSTIIVLATVAEGKVSLIAGVSKDVTDRVKAGELIGMVAQQVGGKGGGRPDMAQAGGTDAAALPAALASVKGWVSAKLQ</sequence>
<proteinExistence type="inferred from homology"/>
<comment type="function">
    <text evidence="1">Catalyzes the attachment of alanine to tRNA(Ala) in a two-step reaction: alanine is first activated by ATP to form Ala-AMP and then transferred to the acceptor end of tRNA(Ala). Also edits incorrectly charged Ser-tRNA(Ala) and Gly-tRNA(Ala) via its editing domain.</text>
</comment>
<comment type="catalytic activity">
    <reaction evidence="1">
        <text>tRNA(Ala) + L-alanine + ATP = L-alanyl-tRNA(Ala) + AMP + diphosphate</text>
        <dbReference type="Rhea" id="RHEA:12540"/>
        <dbReference type="Rhea" id="RHEA-COMP:9657"/>
        <dbReference type="Rhea" id="RHEA-COMP:9923"/>
        <dbReference type="ChEBI" id="CHEBI:30616"/>
        <dbReference type="ChEBI" id="CHEBI:33019"/>
        <dbReference type="ChEBI" id="CHEBI:57972"/>
        <dbReference type="ChEBI" id="CHEBI:78442"/>
        <dbReference type="ChEBI" id="CHEBI:78497"/>
        <dbReference type="ChEBI" id="CHEBI:456215"/>
        <dbReference type="EC" id="6.1.1.7"/>
    </reaction>
</comment>
<comment type="cofactor">
    <cofactor evidence="1">
        <name>Zn(2+)</name>
        <dbReference type="ChEBI" id="CHEBI:29105"/>
    </cofactor>
    <text evidence="1">Binds 1 zinc ion per subunit.</text>
</comment>
<comment type="subunit">
    <text evidence="1">Homotetramer.</text>
</comment>
<comment type="subcellular location">
    <subcellularLocation>
        <location evidence="1">Cytoplasm</location>
    </subcellularLocation>
</comment>
<comment type="domain">
    <text evidence="1">Consists of three domains; the N-terminal catalytic domain, the editing domain and the C-terminal C-Ala domain. The editing domain removes incorrectly charged amino acids, while the C-Ala domain, along with tRNA(Ala), serves as a bridge to cooperatively bring together the editing and aminoacylation centers thus stimulating deacylation of misacylated tRNAs.</text>
</comment>
<comment type="similarity">
    <text evidence="1">Belongs to the class-II aminoacyl-tRNA synthetase family.</text>
</comment>
<keyword id="KW-0007">Acetylation</keyword>
<keyword id="KW-0030">Aminoacyl-tRNA synthetase</keyword>
<keyword id="KW-0067">ATP-binding</keyword>
<keyword id="KW-0963">Cytoplasm</keyword>
<keyword id="KW-0436">Ligase</keyword>
<keyword id="KW-0479">Metal-binding</keyword>
<keyword id="KW-0547">Nucleotide-binding</keyword>
<keyword id="KW-0648">Protein biosynthesis</keyword>
<keyword id="KW-1185">Reference proteome</keyword>
<keyword id="KW-0694">RNA-binding</keyword>
<keyword id="KW-0820">tRNA-binding</keyword>
<keyword id="KW-0862">Zinc</keyword>
<gene>
    <name evidence="1" type="primary">alaS</name>
    <name type="ordered locus">EcE24377A_2980</name>
</gene>
<name>SYA_ECO24</name>
<dbReference type="EC" id="6.1.1.7" evidence="1"/>
<dbReference type="EMBL" id="CP000800">
    <property type="protein sequence ID" value="ABV20043.1"/>
    <property type="molecule type" value="Genomic_DNA"/>
</dbReference>
<dbReference type="RefSeq" id="WP_000047176.1">
    <property type="nucleotide sequence ID" value="NC_009801.1"/>
</dbReference>
<dbReference type="SMR" id="A7ZQC5"/>
<dbReference type="GeneID" id="93779314"/>
<dbReference type="KEGG" id="ecw:EcE24377A_2980"/>
<dbReference type="HOGENOM" id="CLU_004485_1_1_6"/>
<dbReference type="Proteomes" id="UP000001122">
    <property type="component" value="Chromosome"/>
</dbReference>
<dbReference type="GO" id="GO:0005829">
    <property type="term" value="C:cytosol"/>
    <property type="evidence" value="ECO:0007669"/>
    <property type="project" value="TreeGrafter"/>
</dbReference>
<dbReference type="GO" id="GO:0004813">
    <property type="term" value="F:alanine-tRNA ligase activity"/>
    <property type="evidence" value="ECO:0000314"/>
    <property type="project" value="CACAO"/>
</dbReference>
<dbReference type="GO" id="GO:0002161">
    <property type="term" value="F:aminoacyl-tRNA deacylase activity"/>
    <property type="evidence" value="ECO:0007669"/>
    <property type="project" value="TreeGrafter"/>
</dbReference>
<dbReference type="GO" id="GO:0005524">
    <property type="term" value="F:ATP binding"/>
    <property type="evidence" value="ECO:0007669"/>
    <property type="project" value="UniProtKB-UniRule"/>
</dbReference>
<dbReference type="GO" id="GO:0000049">
    <property type="term" value="F:tRNA binding"/>
    <property type="evidence" value="ECO:0007669"/>
    <property type="project" value="UniProtKB-KW"/>
</dbReference>
<dbReference type="GO" id="GO:0008270">
    <property type="term" value="F:zinc ion binding"/>
    <property type="evidence" value="ECO:0007669"/>
    <property type="project" value="UniProtKB-UniRule"/>
</dbReference>
<dbReference type="GO" id="GO:0006419">
    <property type="term" value="P:alanyl-tRNA aminoacylation"/>
    <property type="evidence" value="ECO:0007669"/>
    <property type="project" value="UniProtKB-UniRule"/>
</dbReference>
<dbReference type="GO" id="GO:0045892">
    <property type="term" value="P:negative regulation of DNA-templated transcription"/>
    <property type="evidence" value="ECO:0007669"/>
    <property type="project" value="TreeGrafter"/>
</dbReference>
<dbReference type="CDD" id="cd00673">
    <property type="entry name" value="AlaRS_core"/>
    <property type="match status" value="1"/>
</dbReference>
<dbReference type="FunFam" id="2.40.30.130:FF:000001">
    <property type="entry name" value="Alanine--tRNA ligase"/>
    <property type="match status" value="1"/>
</dbReference>
<dbReference type="FunFam" id="3.10.310.40:FF:000001">
    <property type="entry name" value="Alanine--tRNA ligase"/>
    <property type="match status" value="1"/>
</dbReference>
<dbReference type="FunFam" id="3.30.54.20:FF:000001">
    <property type="entry name" value="Alanine--tRNA ligase"/>
    <property type="match status" value="1"/>
</dbReference>
<dbReference type="FunFam" id="3.30.930.10:FF:000004">
    <property type="entry name" value="Alanine--tRNA ligase"/>
    <property type="match status" value="1"/>
</dbReference>
<dbReference type="FunFam" id="3.30.980.10:FF:000004">
    <property type="entry name" value="Alanine--tRNA ligase, cytoplasmic"/>
    <property type="match status" value="1"/>
</dbReference>
<dbReference type="Gene3D" id="2.40.30.130">
    <property type="match status" value="1"/>
</dbReference>
<dbReference type="Gene3D" id="3.10.310.40">
    <property type="match status" value="1"/>
</dbReference>
<dbReference type="Gene3D" id="3.30.54.20">
    <property type="match status" value="1"/>
</dbReference>
<dbReference type="Gene3D" id="6.10.250.550">
    <property type="match status" value="1"/>
</dbReference>
<dbReference type="Gene3D" id="3.30.930.10">
    <property type="entry name" value="Bira Bifunctional Protein, Domain 2"/>
    <property type="match status" value="1"/>
</dbReference>
<dbReference type="Gene3D" id="3.30.980.10">
    <property type="entry name" value="Threonyl-trna Synthetase, Chain A, domain 2"/>
    <property type="match status" value="1"/>
</dbReference>
<dbReference type="HAMAP" id="MF_00036_B">
    <property type="entry name" value="Ala_tRNA_synth_B"/>
    <property type="match status" value="1"/>
</dbReference>
<dbReference type="InterPro" id="IPR045864">
    <property type="entry name" value="aa-tRNA-synth_II/BPL/LPL"/>
</dbReference>
<dbReference type="InterPro" id="IPR002318">
    <property type="entry name" value="Ala-tRNA-lgiase_IIc"/>
</dbReference>
<dbReference type="InterPro" id="IPR018162">
    <property type="entry name" value="Ala-tRNA-ligase_IIc_anticod-bd"/>
</dbReference>
<dbReference type="InterPro" id="IPR018165">
    <property type="entry name" value="Ala-tRNA-synth_IIc_core"/>
</dbReference>
<dbReference type="InterPro" id="IPR018164">
    <property type="entry name" value="Ala-tRNA-synth_IIc_N"/>
</dbReference>
<dbReference type="InterPro" id="IPR050058">
    <property type="entry name" value="Ala-tRNA_ligase"/>
</dbReference>
<dbReference type="InterPro" id="IPR023033">
    <property type="entry name" value="Ala_tRNA_ligase_euk/bac"/>
</dbReference>
<dbReference type="InterPro" id="IPR003156">
    <property type="entry name" value="DHHA1_dom"/>
</dbReference>
<dbReference type="InterPro" id="IPR018163">
    <property type="entry name" value="Thr/Ala-tRNA-synth_IIc_edit"/>
</dbReference>
<dbReference type="InterPro" id="IPR009000">
    <property type="entry name" value="Transl_B-barrel_sf"/>
</dbReference>
<dbReference type="InterPro" id="IPR012947">
    <property type="entry name" value="tRNA_SAD"/>
</dbReference>
<dbReference type="NCBIfam" id="TIGR00344">
    <property type="entry name" value="alaS"/>
    <property type="match status" value="1"/>
</dbReference>
<dbReference type="PANTHER" id="PTHR11777:SF9">
    <property type="entry name" value="ALANINE--TRNA LIGASE, CYTOPLASMIC"/>
    <property type="match status" value="1"/>
</dbReference>
<dbReference type="PANTHER" id="PTHR11777">
    <property type="entry name" value="ALANYL-TRNA SYNTHETASE"/>
    <property type="match status" value="1"/>
</dbReference>
<dbReference type="Pfam" id="PF02272">
    <property type="entry name" value="DHHA1"/>
    <property type="match status" value="1"/>
</dbReference>
<dbReference type="Pfam" id="PF01411">
    <property type="entry name" value="tRNA-synt_2c"/>
    <property type="match status" value="1"/>
</dbReference>
<dbReference type="Pfam" id="PF07973">
    <property type="entry name" value="tRNA_SAD"/>
    <property type="match status" value="1"/>
</dbReference>
<dbReference type="PRINTS" id="PR00980">
    <property type="entry name" value="TRNASYNTHALA"/>
</dbReference>
<dbReference type="SMART" id="SM00863">
    <property type="entry name" value="tRNA_SAD"/>
    <property type="match status" value="1"/>
</dbReference>
<dbReference type="SUPFAM" id="SSF55681">
    <property type="entry name" value="Class II aaRS and biotin synthetases"/>
    <property type="match status" value="1"/>
</dbReference>
<dbReference type="SUPFAM" id="SSF101353">
    <property type="entry name" value="Putative anticodon-binding domain of alanyl-tRNA synthetase (AlaRS)"/>
    <property type="match status" value="1"/>
</dbReference>
<dbReference type="SUPFAM" id="SSF55186">
    <property type="entry name" value="ThrRS/AlaRS common domain"/>
    <property type="match status" value="1"/>
</dbReference>
<dbReference type="SUPFAM" id="SSF50447">
    <property type="entry name" value="Translation proteins"/>
    <property type="match status" value="1"/>
</dbReference>
<dbReference type="PROSITE" id="PS50860">
    <property type="entry name" value="AA_TRNA_LIGASE_II_ALA"/>
    <property type="match status" value="1"/>
</dbReference>
<feature type="chain" id="PRO_0000347600" description="Alanine--tRNA ligase">
    <location>
        <begin position="1"/>
        <end position="876"/>
    </location>
</feature>
<feature type="binding site" evidence="1">
    <location>
        <position position="564"/>
    </location>
    <ligand>
        <name>Zn(2+)</name>
        <dbReference type="ChEBI" id="CHEBI:29105"/>
    </ligand>
</feature>
<feature type="binding site" evidence="1">
    <location>
        <position position="568"/>
    </location>
    <ligand>
        <name>Zn(2+)</name>
        <dbReference type="ChEBI" id="CHEBI:29105"/>
    </ligand>
</feature>
<feature type="binding site" evidence="1">
    <location>
        <position position="666"/>
    </location>
    <ligand>
        <name>Zn(2+)</name>
        <dbReference type="ChEBI" id="CHEBI:29105"/>
    </ligand>
</feature>
<feature type="binding site" evidence="1">
    <location>
        <position position="670"/>
    </location>
    <ligand>
        <name>Zn(2+)</name>
        <dbReference type="ChEBI" id="CHEBI:29105"/>
    </ligand>
</feature>
<feature type="modified residue" description="N6-acetyllysine" evidence="1">
    <location>
        <position position="74"/>
    </location>
</feature>
<evidence type="ECO:0000255" key="1">
    <source>
        <dbReference type="HAMAP-Rule" id="MF_00036"/>
    </source>
</evidence>
<reference key="1">
    <citation type="journal article" date="2008" name="J. Bacteriol.">
        <title>The pangenome structure of Escherichia coli: comparative genomic analysis of E. coli commensal and pathogenic isolates.</title>
        <authorList>
            <person name="Rasko D.A."/>
            <person name="Rosovitz M.J."/>
            <person name="Myers G.S.A."/>
            <person name="Mongodin E.F."/>
            <person name="Fricke W.F."/>
            <person name="Gajer P."/>
            <person name="Crabtree J."/>
            <person name="Sebaihia M."/>
            <person name="Thomson N.R."/>
            <person name="Chaudhuri R."/>
            <person name="Henderson I.R."/>
            <person name="Sperandio V."/>
            <person name="Ravel J."/>
        </authorList>
    </citation>
    <scope>NUCLEOTIDE SEQUENCE [LARGE SCALE GENOMIC DNA]</scope>
    <source>
        <strain>E24377A / ETEC</strain>
    </source>
</reference>
<organism>
    <name type="scientific">Escherichia coli O139:H28 (strain E24377A / ETEC)</name>
    <dbReference type="NCBI Taxonomy" id="331111"/>
    <lineage>
        <taxon>Bacteria</taxon>
        <taxon>Pseudomonadati</taxon>
        <taxon>Pseudomonadota</taxon>
        <taxon>Gammaproteobacteria</taxon>
        <taxon>Enterobacterales</taxon>
        <taxon>Enterobacteriaceae</taxon>
        <taxon>Escherichia</taxon>
    </lineage>
</organism>
<protein>
    <recommendedName>
        <fullName evidence="1">Alanine--tRNA ligase</fullName>
        <ecNumber evidence="1">6.1.1.7</ecNumber>
    </recommendedName>
    <alternativeName>
        <fullName evidence="1">Alanyl-tRNA synthetase</fullName>
        <shortName evidence="1">AlaRS</shortName>
    </alternativeName>
</protein>